<evidence type="ECO:0000255" key="1">
    <source>
        <dbReference type="HAMAP-Rule" id="MF_00113"/>
    </source>
</evidence>
<reference key="1">
    <citation type="journal article" date="2010" name="Environ. Microbiol.">
        <title>The genome of Syntrophomonas wolfei: new insights into syntrophic metabolism and biohydrogen production.</title>
        <authorList>
            <person name="Sieber J.R."/>
            <person name="Sims D.R."/>
            <person name="Han C."/>
            <person name="Kim E."/>
            <person name="Lykidis A."/>
            <person name="Lapidus A.L."/>
            <person name="McDonnald E."/>
            <person name="Rohlin L."/>
            <person name="Culley D.E."/>
            <person name="Gunsalus R."/>
            <person name="McInerney M.J."/>
        </authorList>
    </citation>
    <scope>NUCLEOTIDE SEQUENCE [LARGE SCALE GENOMIC DNA]</scope>
    <source>
        <strain>DSM 2245B / Goettingen</strain>
    </source>
</reference>
<dbReference type="EC" id="2.4.99.17" evidence="1"/>
<dbReference type="EMBL" id="CP000448">
    <property type="protein sequence ID" value="ABI68736.1"/>
    <property type="molecule type" value="Genomic_DNA"/>
</dbReference>
<dbReference type="RefSeq" id="WP_011640835.1">
    <property type="nucleotide sequence ID" value="NC_008346.1"/>
</dbReference>
<dbReference type="SMR" id="Q0AX18"/>
<dbReference type="STRING" id="335541.Swol_1429"/>
<dbReference type="KEGG" id="swo:Swol_1429"/>
<dbReference type="eggNOG" id="COG0809">
    <property type="taxonomic scope" value="Bacteria"/>
</dbReference>
<dbReference type="HOGENOM" id="CLU_039110_1_0_9"/>
<dbReference type="OrthoDB" id="9805933at2"/>
<dbReference type="UniPathway" id="UPA00392"/>
<dbReference type="Proteomes" id="UP000001968">
    <property type="component" value="Chromosome"/>
</dbReference>
<dbReference type="GO" id="GO:0005737">
    <property type="term" value="C:cytoplasm"/>
    <property type="evidence" value="ECO:0007669"/>
    <property type="project" value="UniProtKB-SubCell"/>
</dbReference>
<dbReference type="GO" id="GO:0051075">
    <property type="term" value="F:S-adenosylmethionine:tRNA ribosyltransferase-isomerase activity"/>
    <property type="evidence" value="ECO:0007669"/>
    <property type="project" value="UniProtKB-EC"/>
</dbReference>
<dbReference type="GO" id="GO:0008616">
    <property type="term" value="P:queuosine biosynthetic process"/>
    <property type="evidence" value="ECO:0007669"/>
    <property type="project" value="UniProtKB-UniRule"/>
</dbReference>
<dbReference type="GO" id="GO:0002099">
    <property type="term" value="P:tRNA wobble guanine modification"/>
    <property type="evidence" value="ECO:0007669"/>
    <property type="project" value="TreeGrafter"/>
</dbReference>
<dbReference type="FunFam" id="2.40.10.240:FF:000002">
    <property type="entry name" value="S-adenosylmethionine:tRNA ribosyltransferase-isomerase"/>
    <property type="match status" value="1"/>
</dbReference>
<dbReference type="FunFam" id="3.40.1780.10:FF:000001">
    <property type="entry name" value="S-adenosylmethionine:tRNA ribosyltransferase-isomerase"/>
    <property type="match status" value="1"/>
</dbReference>
<dbReference type="Gene3D" id="2.40.10.240">
    <property type="entry name" value="QueA-like"/>
    <property type="match status" value="1"/>
</dbReference>
<dbReference type="Gene3D" id="3.40.1780.10">
    <property type="entry name" value="QueA-like"/>
    <property type="match status" value="1"/>
</dbReference>
<dbReference type="HAMAP" id="MF_00113">
    <property type="entry name" value="QueA"/>
    <property type="match status" value="1"/>
</dbReference>
<dbReference type="InterPro" id="IPR003699">
    <property type="entry name" value="QueA"/>
</dbReference>
<dbReference type="InterPro" id="IPR042118">
    <property type="entry name" value="QueA_dom1"/>
</dbReference>
<dbReference type="InterPro" id="IPR042119">
    <property type="entry name" value="QueA_dom2"/>
</dbReference>
<dbReference type="InterPro" id="IPR036100">
    <property type="entry name" value="QueA_sf"/>
</dbReference>
<dbReference type="NCBIfam" id="NF001140">
    <property type="entry name" value="PRK00147.1"/>
    <property type="match status" value="1"/>
</dbReference>
<dbReference type="NCBIfam" id="TIGR00113">
    <property type="entry name" value="queA"/>
    <property type="match status" value="1"/>
</dbReference>
<dbReference type="PANTHER" id="PTHR30307">
    <property type="entry name" value="S-ADENOSYLMETHIONINE:TRNA RIBOSYLTRANSFERASE-ISOMERASE"/>
    <property type="match status" value="1"/>
</dbReference>
<dbReference type="PANTHER" id="PTHR30307:SF0">
    <property type="entry name" value="S-ADENOSYLMETHIONINE:TRNA RIBOSYLTRANSFERASE-ISOMERASE"/>
    <property type="match status" value="1"/>
</dbReference>
<dbReference type="Pfam" id="PF02547">
    <property type="entry name" value="Queuosine_synth"/>
    <property type="match status" value="1"/>
</dbReference>
<dbReference type="SUPFAM" id="SSF111337">
    <property type="entry name" value="QueA-like"/>
    <property type="match status" value="1"/>
</dbReference>
<proteinExistence type="inferred from homology"/>
<comment type="function">
    <text evidence="1">Transfers and isomerizes the ribose moiety from AdoMet to the 7-aminomethyl group of 7-deazaguanine (preQ1-tRNA) to give epoxyqueuosine (oQ-tRNA).</text>
</comment>
<comment type="catalytic activity">
    <reaction evidence="1">
        <text>7-aminomethyl-7-carbaguanosine(34) in tRNA + S-adenosyl-L-methionine = epoxyqueuosine(34) in tRNA + adenine + L-methionine + 2 H(+)</text>
        <dbReference type="Rhea" id="RHEA:32155"/>
        <dbReference type="Rhea" id="RHEA-COMP:10342"/>
        <dbReference type="Rhea" id="RHEA-COMP:18582"/>
        <dbReference type="ChEBI" id="CHEBI:15378"/>
        <dbReference type="ChEBI" id="CHEBI:16708"/>
        <dbReference type="ChEBI" id="CHEBI:57844"/>
        <dbReference type="ChEBI" id="CHEBI:59789"/>
        <dbReference type="ChEBI" id="CHEBI:82833"/>
        <dbReference type="ChEBI" id="CHEBI:194443"/>
        <dbReference type="EC" id="2.4.99.17"/>
    </reaction>
</comment>
<comment type="pathway">
    <text evidence="1">tRNA modification; tRNA-queuosine biosynthesis.</text>
</comment>
<comment type="subunit">
    <text evidence="1">Monomer.</text>
</comment>
<comment type="subcellular location">
    <subcellularLocation>
        <location evidence="1">Cytoplasm</location>
    </subcellularLocation>
</comment>
<comment type="similarity">
    <text evidence="1">Belongs to the QueA family.</text>
</comment>
<gene>
    <name evidence="1" type="primary">queA</name>
    <name type="ordered locus">Swol_1429</name>
</gene>
<protein>
    <recommendedName>
        <fullName evidence="1">S-adenosylmethionine:tRNA ribosyltransferase-isomerase</fullName>
        <ecNumber evidence="1">2.4.99.17</ecNumber>
    </recommendedName>
    <alternativeName>
        <fullName evidence="1">Queuosine biosynthesis protein QueA</fullName>
    </alternativeName>
</protein>
<accession>Q0AX18</accession>
<organism>
    <name type="scientific">Syntrophomonas wolfei subsp. wolfei (strain DSM 2245B / Goettingen)</name>
    <dbReference type="NCBI Taxonomy" id="335541"/>
    <lineage>
        <taxon>Bacteria</taxon>
        <taxon>Bacillati</taxon>
        <taxon>Bacillota</taxon>
        <taxon>Clostridia</taxon>
        <taxon>Eubacteriales</taxon>
        <taxon>Syntrophomonadaceae</taxon>
        <taxon>Syntrophomonas</taxon>
    </lineage>
</organism>
<feature type="chain" id="PRO_1000057744" description="S-adenosylmethionine:tRNA ribosyltransferase-isomerase">
    <location>
        <begin position="1"/>
        <end position="352"/>
    </location>
</feature>
<sequence>MQHDKNEDIYRLSTYYYDLPPELIAQYPAEYRDSSRLLVLDRKSGDLNDRAFKDISLYLKKGDALVLNETRVIPARFFAYKESGARVEILLLKKLGDDWEALVKPARRLKAGSRVFLSPDKPLVIEIVEELDFAGGRRVRFQDSVDEDTLLQEQGHIPLPPYINRPDEELDRERYQTVYACKSGSVAAPTAGLHFTPDLLKEITLQGINIVRIVLHVGMGTFRPVKNEDIRQHNMHLEYYEVAEDAAALLNLTRESGGQIVAVGTTVVRTLESVYNKDCGFLAGKGETNKYIFPGYQFRAIDKLLTNFHLPGSSLLMLVAGFAGTESTLAAYRHAVENRYRFFSYGDAMLVI</sequence>
<name>QUEA_SYNWW</name>
<keyword id="KW-0963">Cytoplasm</keyword>
<keyword id="KW-0671">Queuosine biosynthesis</keyword>
<keyword id="KW-1185">Reference proteome</keyword>
<keyword id="KW-0949">S-adenosyl-L-methionine</keyword>
<keyword id="KW-0808">Transferase</keyword>